<comment type="catalytic activity">
    <reaction evidence="1">
        <text>5-amino-1-(5-phospho-D-ribosyl)imidazole-4-carboxylate + L-aspartate + ATP = (2S)-2-[5-amino-1-(5-phospho-beta-D-ribosyl)imidazole-4-carboxamido]succinate + ADP + phosphate + 2 H(+)</text>
        <dbReference type="Rhea" id="RHEA:22628"/>
        <dbReference type="ChEBI" id="CHEBI:15378"/>
        <dbReference type="ChEBI" id="CHEBI:29991"/>
        <dbReference type="ChEBI" id="CHEBI:30616"/>
        <dbReference type="ChEBI" id="CHEBI:43474"/>
        <dbReference type="ChEBI" id="CHEBI:58443"/>
        <dbReference type="ChEBI" id="CHEBI:77657"/>
        <dbReference type="ChEBI" id="CHEBI:456216"/>
        <dbReference type="EC" id="6.3.2.6"/>
    </reaction>
</comment>
<comment type="pathway">
    <text evidence="1">Purine metabolism; IMP biosynthesis via de novo pathway; 5-amino-1-(5-phospho-D-ribosyl)imidazole-4-carboxamide from 5-amino-1-(5-phospho-D-ribosyl)imidazole-4-carboxylate: step 1/2.</text>
</comment>
<comment type="similarity">
    <text evidence="1">Belongs to the SAICAR synthetase family.</text>
</comment>
<gene>
    <name evidence="1" type="primary">purC</name>
    <name type="ordered locus">COPRO5265_0191</name>
</gene>
<sequence length="236" mass="27054">MEKLDLLYEGKAKRVYKTDDPRYYIIEYKDEATAFDGKKKGIIQGKGTVNNKVSAVFFQLLEENGVPTHFVELLSPTEMLVKRVEIIPLEVIVRNYAAGSISRRLGLEEGIKFDQPIVEFCYKNDELGDPMVNNYHILAMKLANEEEINALTQQALRINQILSQFLLGKNIILVDFKLEFGRTDEGDIVLADEISPDTCRFWDSATMEKLDKDRFRRDMGGVEEAYMEIARRLGCV</sequence>
<dbReference type="EC" id="6.3.2.6" evidence="1"/>
<dbReference type="EMBL" id="CP001145">
    <property type="protein sequence ID" value="ACI17914.1"/>
    <property type="molecule type" value="Genomic_DNA"/>
</dbReference>
<dbReference type="RefSeq" id="WP_012544565.1">
    <property type="nucleotide sequence ID" value="NC_011295.1"/>
</dbReference>
<dbReference type="SMR" id="B5Y714"/>
<dbReference type="STRING" id="309798.COPRO5265_0191"/>
<dbReference type="KEGG" id="cpo:COPRO5265_0191"/>
<dbReference type="eggNOG" id="COG0152">
    <property type="taxonomic scope" value="Bacteria"/>
</dbReference>
<dbReference type="HOGENOM" id="CLU_061495_2_0_9"/>
<dbReference type="OrthoDB" id="9801549at2"/>
<dbReference type="UniPathway" id="UPA00074">
    <property type="reaction ID" value="UER00131"/>
</dbReference>
<dbReference type="Proteomes" id="UP000001732">
    <property type="component" value="Chromosome"/>
</dbReference>
<dbReference type="GO" id="GO:0005524">
    <property type="term" value="F:ATP binding"/>
    <property type="evidence" value="ECO:0007669"/>
    <property type="project" value="UniProtKB-KW"/>
</dbReference>
<dbReference type="GO" id="GO:0004639">
    <property type="term" value="F:phosphoribosylaminoimidazolesuccinocarboxamide synthase activity"/>
    <property type="evidence" value="ECO:0007669"/>
    <property type="project" value="UniProtKB-UniRule"/>
</dbReference>
<dbReference type="GO" id="GO:0006189">
    <property type="term" value="P:'de novo' IMP biosynthetic process"/>
    <property type="evidence" value="ECO:0007669"/>
    <property type="project" value="UniProtKB-UniRule"/>
</dbReference>
<dbReference type="GO" id="GO:0009236">
    <property type="term" value="P:cobalamin biosynthetic process"/>
    <property type="evidence" value="ECO:0007669"/>
    <property type="project" value="InterPro"/>
</dbReference>
<dbReference type="CDD" id="cd01415">
    <property type="entry name" value="SAICAR_synt_PurC"/>
    <property type="match status" value="1"/>
</dbReference>
<dbReference type="FunFam" id="3.30.200.20:FF:000086">
    <property type="entry name" value="Phosphoribosylaminoimidazole-succinocarboxamide synthase"/>
    <property type="match status" value="1"/>
</dbReference>
<dbReference type="FunFam" id="3.30.470.20:FF:000006">
    <property type="entry name" value="Phosphoribosylaminoimidazole-succinocarboxamide synthase"/>
    <property type="match status" value="1"/>
</dbReference>
<dbReference type="Gene3D" id="3.30.470.20">
    <property type="entry name" value="ATP-grasp fold, B domain"/>
    <property type="match status" value="1"/>
</dbReference>
<dbReference type="Gene3D" id="3.30.200.20">
    <property type="entry name" value="Phosphorylase Kinase, domain 1"/>
    <property type="match status" value="1"/>
</dbReference>
<dbReference type="HAMAP" id="MF_00137">
    <property type="entry name" value="SAICAR_synth"/>
    <property type="match status" value="1"/>
</dbReference>
<dbReference type="InterPro" id="IPR028923">
    <property type="entry name" value="SAICAR_synt/ADE2_N"/>
</dbReference>
<dbReference type="InterPro" id="IPR033934">
    <property type="entry name" value="SAICAR_synt_PurC"/>
</dbReference>
<dbReference type="InterPro" id="IPR001636">
    <property type="entry name" value="SAICAR_synth"/>
</dbReference>
<dbReference type="InterPro" id="IPR050089">
    <property type="entry name" value="SAICAR_synthetase"/>
</dbReference>
<dbReference type="InterPro" id="IPR018236">
    <property type="entry name" value="SAICAR_synthetase_CS"/>
</dbReference>
<dbReference type="NCBIfam" id="TIGR00081">
    <property type="entry name" value="purC"/>
    <property type="match status" value="1"/>
</dbReference>
<dbReference type="PANTHER" id="PTHR43599">
    <property type="entry name" value="MULTIFUNCTIONAL PROTEIN ADE2"/>
    <property type="match status" value="1"/>
</dbReference>
<dbReference type="PANTHER" id="PTHR43599:SF3">
    <property type="entry name" value="SI:DKEY-6E2.2"/>
    <property type="match status" value="1"/>
</dbReference>
<dbReference type="Pfam" id="PF01259">
    <property type="entry name" value="SAICAR_synt"/>
    <property type="match status" value="1"/>
</dbReference>
<dbReference type="SUPFAM" id="SSF56104">
    <property type="entry name" value="SAICAR synthase-like"/>
    <property type="match status" value="1"/>
</dbReference>
<dbReference type="PROSITE" id="PS01057">
    <property type="entry name" value="SAICAR_SYNTHETASE_1"/>
    <property type="match status" value="1"/>
</dbReference>
<dbReference type="PROSITE" id="PS01058">
    <property type="entry name" value="SAICAR_SYNTHETASE_2"/>
    <property type="match status" value="1"/>
</dbReference>
<protein>
    <recommendedName>
        <fullName evidence="1">Phosphoribosylaminoimidazole-succinocarboxamide synthase</fullName>
        <ecNumber evidence="1">6.3.2.6</ecNumber>
    </recommendedName>
    <alternativeName>
        <fullName evidence="1">SAICAR synthetase</fullName>
    </alternativeName>
</protein>
<keyword id="KW-0067">ATP-binding</keyword>
<keyword id="KW-0436">Ligase</keyword>
<keyword id="KW-0547">Nucleotide-binding</keyword>
<keyword id="KW-0658">Purine biosynthesis</keyword>
<keyword id="KW-1185">Reference proteome</keyword>
<accession>B5Y714</accession>
<organism>
    <name type="scientific">Coprothermobacter proteolyticus (strain ATCC 35245 / DSM 5265 / OCM 4 / BT)</name>
    <dbReference type="NCBI Taxonomy" id="309798"/>
    <lineage>
        <taxon>Bacteria</taxon>
        <taxon>Pseudomonadati</taxon>
        <taxon>Coprothermobacterota</taxon>
        <taxon>Coprothermobacteria</taxon>
        <taxon>Coprothermobacterales</taxon>
        <taxon>Coprothermobacteraceae</taxon>
        <taxon>Coprothermobacter</taxon>
    </lineage>
</organism>
<reference key="1">
    <citation type="submission" date="2008-08" db="EMBL/GenBank/DDBJ databases">
        <title>The complete genome sequence of Coprothermobacter proteolyticus strain ATCC 5245 / DSM 5265 / BT.</title>
        <authorList>
            <person name="Dodson R.J."/>
            <person name="Durkin A.S."/>
            <person name="Wu M."/>
            <person name="Eisen J."/>
            <person name="Sutton G."/>
        </authorList>
    </citation>
    <scope>NUCLEOTIDE SEQUENCE [LARGE SCALE GENOMIC DNA]</scope>
    <source>
        <strain>ATCC 35245 / DSM 5265 / OCM 4 / BT</strain>
    </source>
</reference>
<name>PUR7_COPPD</name>
<evidence type="ECO:0000255" key="1">
    <source>
        <dbReference type="HAMAP-Rule" id="MF_00137"/>
    </source>
</evidence>
<feature type="chain" id="PRO_1000095977" description="Phosphoribosylaminoimidazole-succinocarboxamide synthase">
    <location>
        <begin position="1"/>
        <end position="236"/>
    </location>
</feature>
<proteinExistence type="inferred from homology"/>